<proteinExistence type="inferred from homology"/>
<comment type="function">
    <text evidence="1">Usually encoded in the trnK tRNA gene intron. Probably assists in splicing its own and other chloroplast group II introns.</text>
</comment>
<comment type="subcellular location">
    <subcellularLocation>
        <location>Plastid</location>
        <location>Chloroplast</location>
    </subcellularLocation>
</comment>
<comment type="similarity">
    <text evidence="1">Belongs to the intron maturase 2 family. MatK subfamily.</text>
</comment>
<evidence type="ECO:0000255" key="1">
    <source>
        <dbReference type="HAMAP-Rule" id="MF_01390"/>
    </source>
</evidence>
<accession>Q71ML1</accession>
<sequence length="504" mass="59827">MEEFKRNLELDRSQXHDFIYPLIFQEYIYALAHDCSLNRFLFFENPGXDNKXSLLIVKRLINHLITQIYQQNHFLFSANDSNQNQFMGYNKNWYFXMIFEGFAIVVEIPFSXQLLSSLEGKERVKSHNLRSIHSIFPFLEDKFPHLNYVLDILIPHPVHLEILVQTLRIWIKDVSSLHLLRFFLHESRNWNSLTTPKKSSFSFSKXNERLFFFLYNFHVCEYESIFVFLRNQSSHLRSISSEIFLERIFFYRKIEVSSKDFKAILWLFKDPFLHYIRYQGKSLLASKGTLVLMNKWKYYFVTFSQCYFYMWSQPRKININLLSNHSLDFMGYLSSVRLNPLMVRSQMLENAFLIRNAIKKFDTLVPITPMIGSLSXXXXXXXXXXXXXXXXXXXXXXXXXXXXXXXXXXXXXXXXXXXXXXXXXXXXXXXXXXXXXXXXXRKHKITVRAFLKKLGVGLLEEFFTEEEQVFYLTLPKASYTSGKLYRRRIWYLDIICINDLSNHE</sequence>
<geneLocation type="chloroplast"/>
<dbReference type="EMBL" id="AF440416">
    <property type="protein sequence ID" value="AAQ04034.1"/>
    <property type="molecule type" value="Genomic_DNA"/>
</dbReference>
<dbReference type="GO" id="GO:0009507">
    <property type="term" value="C:chloroplast"/>
    <property type="evidence" value="ECO:0007669"/>
    <property type="project" value="UniProtKB-SubCell"/>
</dbReference>
<dbReference type="GO" id="GO:0003723">
    <property type="term" value="F:RNA binding"/>
    <property type="evidence" value="ECO:0007669"/>
    <property type="project" value="UniProtKB-KW"/>
</dbReference>
<dbReference type="GO" id="GO:0006397">
    <property type="term" value="P:mRNA processing"/>
    <property type="evidence" value="ECO:0007669"/>
    <property type="project" value="UniProtKB-KW"/>
</dbReference>
<dbReference type="GO" id="GO:0008380">
    <property type="term" value="P:RNA splicing"/>
    <property type="evidence" value="ECO:0007669"/>
    <property type="project" value="UniProtKB-UniRule"/>
</dbReference>
<dbReference type="GO" id="GO:0008033">
    <property type="term" value="P:tRNA processing"/>
    <property type="evidence" value="ECO:0007669"/>
    <property type="project" value="UniProtKB-KW"/>
</dbReference>
<dbReference type="HAMAP" id="MF_01390">
    <property type="entry name" value="MatK"/>
    <property type="match status" value="1"/>
</dbReference>
<dbReference type="InterPro" id="IPR002866">
    <property type="entry name" value="Maturase_MatK"/>
</dbReference>
<dbReference type="InterPro" id="IPR024942">
    <property type="entry name" value="Maturase_MatK_N"/>
</dbReference>
<dbReference type="PANTHER" id="PTHR34811">
    <property type="entry name" value="MATURASE K"/>
    <property type="match status" value="1"/>
</dbReference>
<dbReference type="PANTHER" id="PTHR34811:SF1">
    <property type="entry name" value="MATURASE K"/>
    <property type="match status" value="1"/>
</dbReference>
<dbReference type="Pfam" id="PF01824">
    <property type="entry name" value="MatK_N"/>
    <property type="match status" value="1"/>
</dbReference>
<organism>
    <name type="scientific">Chimaphila umbellata</name>
    <name type="common">Pipsissewa</name>
    <name type="synonym">Pyrola umbellata</name>
    <dbReference type="NCBI Taxonomy" id="93815"/>
    <lineage>
        <taxon>Eukaryota</taxon>
        <taxon>Viridiplantae</taxon>
        <taxon>Streptophyta</taxon>
        <taxon>Embryophyta</taxon>
        <taxon>Tracheophyta</taxon>
        <taxon>Spermatophyta</taxon>
        <taxon>Magnoliopsida</taxon>
        <taxon>eudicotyledons</taxon>
        <taxon>Gunneridae</taxon>
        <taxon>Pentapetalae</taxon>
        <taxon>asterids</taxon>
        <taxon>Ericales</taxon>
        <taxon>Ericaceae</taxon>
        <taxon>Pyroloideae</taxon>
        <taxon>Pyroleae</taxon>
        <taxon>Chimaphila</taxon>
    </lineage>
</organism>
<gene>
    <name evidence="1" type="primary">matK</name>
</gene>
<keyword id="KW-0150">Chloroplast</keyword>
<keyword id="KW-0507">mRNA processing</keyword>
<keyword id="KW-0934">Plastid</keyword>
<keyword id="KW-0694">RNA-binding</keyword>
<keyword id="KW-0819">tRNA processing</keyword>
<feature type="chain" id="PRO_0000143330" description="Maturase K">
    <location>
        <begin position="1"/>
        <end position="504"/>
    </location>
</feature>
<reference key="1">
    <citation type="journal article" date="2002" name="Bot. Rev.">
        <title>A phylogenetic classification of Ericaceae: molecular and morphological evidence.</title>
        <authorList>
            <person name="Kron K.A."/>
            <person name="Judd W.S."/>
            <person name="Stevens P.F."/>
            <person name="Crayn D.M."/>
            <person name="Anderberg A.A."/>
            <person name="Gadek P.A."/>
            <person name="Quinn C.J."/>
            <person name="Luteyn J.L."/>
        </authorList>
    </citation>
    <scope>NUCLEOTIDE SEQUENCE [GENOMIC DNA]</scope>
</reference>
<protein>
    <recommendedName>
        <fullName evidence="1">Maturase K</fullName>
    </recommendedName>
    <alternativeName>
        <fullName evidence="1">Intron maturase</fullName>
    </alternativeName>
</protein>
<name>MATK_CHIUM</name>